<feature type="signal peptide" evidence="2">
    <location>
        <begin position="1"/>
        <end position="20"/>
    </location>
</feature>
<feature type="propeptide" id="PRO_0000451002" evidence="5">
    <location>
        <begin position="21"/>
        <end position="52"/>
    </location>
</feature>
<feature type="peptide" id="PRO_5007179723" description="Conotoxin Im3.1">
    <location>
        <begin position="53"/>
        <end position="67"/>
    </location>
</feature>
<feature type="disulfide bond" evidence="1">
    <location>
        <begin position="53"/>
        <end position="63"/>
    </location>
</feature>
<feature type="disulfide bond" evidence="1">
    <location>
        <begin position="54"/>
        <end position="61"/>
    </location>
</feature>
<feature type="disulfide bond" evidence="1">
    <location>
        <begin position="59"/>
        <end position="64"/>
    </location>
</feature>
<protein>
    <recommendedName>
        <fullName evidence="5">Conotoxin Im3.1</fullName>
    </recommendedName>
    <alternativeName>
        <fullName evidence="4 7">Conopeptide im012</fullName>
    </alternativeName>
</protein>
<organism>
    <name type="scientific">Conus imperialis</name>
    <name type="common">Imperial cone</name>
    <dbReference type="NCBI Taxonomy" id="35631"/>
    <lineage>
        <taxon>Eukaryota</taxon>
        <taxon>Metazoa</taxon>
        <taxon>Spiralia</taxon>
        <taxon>Lophotrochozoa</taxon>
        <taxon>Mollusca</taxon>
        <taxon>Gastropoda</taxon>
        <taxon>Caenogastropoda</taxon>
        <taxon>Neogastropoda</taxon>
        <taxon>Conoidea</taxon>
        <taxon>Conidae</taxon>
        <taxon>Conus</taxon>
        <taxon>Stephanoconus</taxon>
    </lineage>
</organism>
<dbReference type="EMBL" id="KT377406">
    <property type="protein sequence ID" value="AME17670.1"/>
    <property type="molecule type" value="mRNA"/>
</dbReference>
<dbReference type="SMR" id="A0A125S9E6"/>
<dbReference type="GO" id="GO:0005576">
    <property type="term" value="C:extracellular region"/>
    <property type="evidence" value="ECO:0007669"/>
    <property type="project" value="UniProtKB-SubCell"/>
</dbReference>
<dbReference type="GO" id="GO:0008200">
    <property type="term" value="F:ion channel inhibitor activity"/>
    <property type="evidence" value="ECO:0007669"/>
    <property type="project" value="InterPro"/>
</dbReference>
<dbReference type="GO" id="GO:0090729">
    <property type="term" value="F:toxin activity"/>
    <property type="evidence" value="ECO:0007669"/>
    <property type="project" value="UniProtKB-KW"/>
</dbReference>
<dbReference type="InterPro" id="IPR004214">
    <property type="entry name" value="Conotoxin"/>
</dbReference>
<dbReference type="Pfam" id="PF02950">
    <property type="entry name" value="Conotoxin"/>
    <property type="match status" value="1"/>
</dbReference>
<comment type="function">
    <text evidence="5">Probable neurotoxin.</text>
</comment>
<comment type="subcellular location">
    <subcellularLocation>
        <location evidence="3">Secreted</location>
    </subcellularLocation>
</comment>
<comment type="tissue specificity">
    <text evidence="6">Expressed by the venom duct.</text>
</comment>
<comment type="domain">
    <text evidence="5">The cysteine framework is III (CC-C-C-CC). Classified in the M-1 branch, since 1 residue stands between the fourth and the fifth cysteine residues.</text>
</comment>
<comment type="similarity">
    <text evidence="5">Belongs to the conotoxin M superfamily.</text>
</comment>
<sequence>MMSTLVVLLTICLLMLPLTARQLDADQLADQLAERMEDISADQNRWFDPVKRCCMRPICMCPCCVNG</sequence>
<evidence type="ECO:0000250" key="1">
    <source>
        <dbReference type="UniProtKB" id="Q5EHP3"/>
    </source>
</evidence>
<evidence type="ECO:0000255" key="2"/>
<evidence type="ECO:0000269" key="3">
    <source>
    </source>
</evidence>
<evidence type="ECO:0000303" key="4">
    <source>
    </source>
</evidence>
<evidence type="ECO:0000305" key="5"/>
<evidence type="ECO:0000305" key="6">
    <source>
    </source>
</evidence>
<evidence type="ECO:0000312" key="7">
    <source>
        <dbReference type="EMBL" id="AME17670.1"/>
    </source>
</evidence>
<proteinExistence type="evidence at protein level"/>
<accession>A0A125S9E6</accession>
<reference key="1">
    <citation type="journal article" date="2019" name="Mar. Drugs">
        <title>Transcriptomic-proteomic correlation in the predation-evoked venom of the cone snail, Conus imperialis.</title>
        <authorList>
            <person name="Jin A.H."/>
            <person name="Dutertre S."/>
            <person name="Dutt M."/>
            <person name="Lavergne V."/>
            <person name="Jones A."/>
            <person name="Lewis R.J."/>
            <person name="Alewood P.F."/>
        </authorList>
    </citation>
    <scope>NUCLEOTIDE SEQUENCE [MRNA]</scope>
    <scope>IDENTIFICATION BY MASS SPECTROMETRY</scope>
    <scope>SUBCELLULAR LOCATION</scope>
    <source>
        <tissue>Venom</tissue>
        <tissue>Venom duct</tissue>
    </source>
</reference>
<name>CM31_CONIM</name>
<keyword id="KW-0165">Cleavage on pair of basic residues</keyword>
<keyword id="KW-1015">Disulfide bond</keyword>
<keyword id="KW-0528">Neurotoxin</keyword>
<keyword id="KW-0964">Secreted</keyword>
<keyword id="KW-0732">Signal</keyword>
<keyword id="KW-0800">Toxin</keyword>